<keyword id="KW-0004">4Fe-4S</keyword>
<keyword id="KW-0408">Iron</keyword>
<keyword id="KW-0411">Iron-sulfur</keyword>
<keyword id="KW-0456">Lyase</keyword>
<keyword id="KW-0460">Magnesium</keyword>
<keyword id="KW-0479">Metal-binding</keyword>
<keyword id="KW-0671">Queuosine biosynthesis</keyword>
<keyword id="KW-1185">Reference proteome</keyword>
<keyword id="KW-0949">S-adenosyl-L-methionine</keyword>
<gene>
    <name evidence="1" type="primary">queE</name>
    <name type="ordered locus">sll2011</name>
</gene>
<comment type="function">
    <text evidence="1">Catalyzes the complex heterocyclic radical-mediated conversion of 6-carboxy-5,6,7,8-tetrahydropterin (CPH4) to 7-carboxy-7-deazaguanine (CDG), a step common to the biosynthetic pathways of all 7-deazapurine-containing compounds.</text>
</comment>
<comment type="catalytic activity">
    <reaction evidence="1">
        <text>6-carboxy-5,6,7,8-tetrahydropterin + H(+) = 7-carboxy-7-deazaguanine + NH4(+)</text>
        <dbReference type="Rhea" id="RHEA:27974"/>
        <dbReference type="ChEBI" id="CHEBI:15378"/>
        <dbReference type="ChEBI" id="CHEBI:28938"/>
        <dbReference type="ChEBI" id="CHEBI:61032"/>
        <dbReference type="ChEBI" id="CHEBI:61036"/>
        <dbReference type="EC" id="4.3.99.3"/>
    </reaction>
</comment>
<comment type="cofactor">
    <cofactor evidence="1">
        <name>[4Fe-4S] cluster</name>
        <dbReference type="ChEBI" id="CHEBI:49883"/>
    </cofactor>
    <text evidence="1">Binds 1 [4Fe-4S] cluster. The cluster is coordinated with 3 cysteines and an exchangeable S-adenosyl-L-methionine.</text>
</comment>
<comment type="cofactor">
    <cofactor evidence="1">
        <name>S-adenosyl-L-methionine</name>
        <dbReference type="ChEBI" id="CHEBI:59789"/>
    </cofactor>
    <text evidence="1">Binds 1 S-adenosyl-L-methionine per subunit.</text>
</comment>
<comment type="cofactor">
    <cofactor evidence="1">
        <name>Mg(2+)</name>
        <dbReference type="ChEBI" id="CHEBI:18420"/>
    </cofactor>
</comment>
<comment type="pathway">
    <text evidence="1">Purine metabolism; 7-cyano-7-deazaguanine biosynthesis.</text>
</comment>
<comment type="subunit">
    <text evidence="1">Homodimer.</text>
</comment>
<comment type="similarity">
    <text evidence="1">Belongs to the radical SAM superfamily. 7-carboxy-7-deazaguanine synthase family.</text>
</comment>
<evidence type="ECO:0000255" key="1">
    <source>
        <dbReference type="HAMAP-Rule" id="MF_00917"/>
    </source>
</evidence>
<evidence type="ECO:0000255" key="2">
    <source>
        <dbReference type="PROSITE-ProRule" id="PRU01266"/>
    </source>
</evidence>
<reference key="1">
    <citation type="journal article" date="1996" name="DNA Res.">
        <title>Sequence analysis of the genome of the unicellular cyanobacterium Synechocystis sp. strain PCC6803. II. Sequence determination of the entire genome and assignment of potential protein-coding regions.</title>
        <authorList>
            <person name="Kaneko T."/>
            <person name="Sato S."/>
            <person name="Kotani H."/>
            <person name="Tanaka A."/>
            <person name="Asamizu E."/>
            <person name="Nakamura Y."/>
            <person name="Miyajima N."/>
            <person name="Hirosawa M."/>
            <person name="Sugiura M."/>
            <person name="Sasamoto S."/>
            <person name="Kimura T."/>
            <person name="Hosouchi T."/>
            <person name="Matsuno A."/>
            <person name="Muraki A."/>
            <person name="Nakazaki N."/>
            <person name="Naruo K."/>
            <person name="Okumura S."/>
            <person name="Shimpo S."/>
            <person name="Takeuchi C."/>
            <person name="Wada T."/>
            <person name="Watanabe A."/>
            <person name="Yamada M."/>
            <person name="Yasuda M."/>
            <person name="Tabata S."/>
        </authorList>
    </citation>
    <scope>NUCLEOTIDE SEQUENCE [LARGE SCALE GENOMIC DNA]</scope>
    <source>
        <strain>ATCC 27184 / PCC 6803 / Kazusa</strain>
    </source>
</reference>
<feature type="chain" id="PRO_0000416214" description="7-carboxy-7-deazaguanine synthase">
    <location>
        <begin position="1"/>
        <end position="208"/>
    </location>
</feature>
<feature type="domain" description="Radical SAM core" evidence="2">
    <location>
        <begin position="29"/>
        <end position="208"/>
    </location>
</feature>
<feature type="binding site" evidence="1">
    <location>
        <begin position="23"/>
        <end position="25"/>
    </location>
    <ligand>
        <name>substrate</name>
    </ligand>
</feature>
<feature type="binding site" evidence="1">
    <location>
        <position position="38"/>
    </location>
    <ligand>
        <name>substrate</name>
    </ligand>
</feature>
<feature type="binding site" evidence="1">
    <location>
        <position position="42"/>
    </location>
    <ligand>
        <name>[4Fe-4S] cluster</name>
        <dbReference type="ChEBI" id="CHEBI:49883"/>
        <note>4Fe-4S-S-AdoMet</note>
    </ligand>
</feature>
<feature type="binding site" evidence="1">
    <location>
        <position position="46"/>
    </location>
    <ligand>
        <name>[4Fe-4S] cluster</name>
        <dbReference type="ChEBI" id="CHEBI:49883"/>
        <note>4Fe-4S-S-AdoMet</note>
    </ligand>
</feature>
<feature type="binding site" evidence="1">
    <location>
        <position position="49"/>
    </location>
    <ligand>
        <name>[4Fe-4S] cluster</name>
        <dbReference type="ChEBI" id="CHEBI:49883"/>
        <note>4Fe-4S-S-AdoMet</note>
    </ligand>
</feature>
<feature type="binding site" evidence="1">
    <location>
        <position position="83"/>
    </location>
    <ligand>
        <name>substrate</name>
    </ligand>
</feature>
<feature type="binding site" evidence="1">
    <location>
        <position position="85"/>
    </location>
    <ligand>
        <name>S-adenosyl-L-methionine</name>
        <dbReference type="ChEBI" id="CHEBI:59789"/>
    </ligand>
</feature>
<feature type="binding site" evidence="1">
    <location>
        <begin position="126"/>
        <end position="128"/>
    </location>
    <ligand>
        <name>S-adenosyl-L-methionine</name>
        <dbReference type="ChEBI" id="CHEBI:59789"/>
    </ligand>
</feature>
<accession>P73667</accession>
<protein>
    <recommendedName>
        <fullName evidence="1">7-carboxy-7-deazaguanine synthase</fullName>
        <shortName evidence="1">CDG synthase</shortName>
        <ecNumber evidence="1">4.3.99.3</ecNumber>
    </recommendedName>
    <alternativeName>
        <fullName evidence="1">Queuosine biosynthesis protein QueE</fullName>
    </alternativeName>
</protein>
<organism>
    <name type="scientific">Synechocystis sp. (strain ATCC 27184 / PCC 6803 / Kazusa)</name>
    <dbReference type="NCBI Taxonomy" id="1111708"/>
    <lineage>
        <taxon>Bacteria</taxon>
        <taxon>Bacillati</taxon>
        <taxon>Cyanobacteriota</taxon>
        <taxon>Cyanophyceae</taxon>
        <taxon>Synechococcales</taxon>
        <taxon>Merismopediaceae</taxon>
        <taxon>Synechocystis</taxon>
    </lineage>
</organism>
<name>QUEE_SYNY3</name>
<proteinExistence type="inferred from homology"/>
<dbReference type="EC" id="4.3.99.3" evidence="1"/>
<dbReference type="EMBL" id="BA000022">
    <property type="protein sequence ID" value="BAA17712.1"/>
    <property type="molecule type" value="Genomic_DNA"/>
</dbReference>
<dbReference type="PIR" id="S77154">
    <property type="entry name" value="S77154"/>
</dbReference>
<dbReference type="SMR" id="P73667"/>
<dbReference type="FunCoup" id="P73667">
    <property type="interactions" value="65"/>
</dbReference>
<dbReference type="STRING" id="1148.gene:10498579"/>
<dbReference type="PaxDb" id="1148-1652793"/>
<dbReference type="EnsemblBacteria" id="BAA17712">
    <property type="protein sequence ID" value="BAA17712"/>
    <property type="gene ID" value="BAA17712"/>
</dbReference>
<dbReference type="KEGG" id="syn:sll2011"/>
<dbReference type="eggNOG" id="COG0602">
    <property type="taxonomic scope" value="Bacteria"/>
</dbReference>
<dbReference type="InParanoid" id="P73667"/>
<dbReference type="PhylomeDB" id="P73667"/>
<dbReference type="UniPathway" id="UPA00391"/>
<dbReference type="Proteomes" id="UP000001425">
    <property type="component" value="Chromosome"/>
</dbReference>
<dbReference type="GO" id="GO:0051539">
    <property type="term" value="F:4 iron, 4 sulfur cluster binding"/>
    <property type="evidence" value="ECO:0007669"/>
    <property type="project" value="UniProtKB-UniRule"/>
</dbReference>
<dbReference type="GO" id="GO:0016840">
    <property type="term" value="F:carbon-nitrogen lyase activity"/>
    <property type="evidence" value="ECO:0007669"/>
    <property type="project" value="UniProtKB-UniRule"/>
</dbReference>
<dbReference type="GO" id="GO:0000287">
    <property type="term" value="F:magnesium ion binding"/>
    <property type="evidence" value="ECO:0007669"/>
    <property type="project" value="UniProtKB-UniRule"/>
</dbReference>
<dbReference type="GO" id="GO:1904047">
    <property type="term" value="F:S-adenosyl-L-methionine binding"/>
    <property type="evidence" value="ECO:0007669"/>
    <property type="project" value="UniProtKB-UniRule"/>
</dbReference>
<dbReference type="GO" id="GO:0008616">
    <property type="term" value="P:queuosine biosynthetic process"/>
    <property type="evidence" value="ECO:0007669"/>
    <property type="project" value="UniProtKB-UniRule"/>
</dbReference>
<dbReference type="Gene3D" id="3.20.20.70">
    <property type="entry name" value="Aldolase class I"/>
    <property type="match status" value="1"/>
</dbReference>
<dbReference type="HAMAP" id="MF_00917">
    <property type="entry name" value="QueE"/>
    <property type="match status" value="1"/>
</dbReference>
<dbReference type="InterPro" id="IPR024924">
    <property type="entry name" value="7-CO-7-deazaguanine_synth-like"/>
</dbReference>
<dbReference type="InterPro" id="IPR013785">
    <property type="entry name" value="Aldolase_TIM"/>
</dbReference>
<dbReference type="InterPro" id="IPR007197">
    <property type="entry name" value="rSAM"/>
</dbReference>
<dbReference type="PANTHER" id="PTHR42836">
    <property type="entry name" value="7-CARBOXY-7-DEAZAGUANINE SYNTHASE"/>
    <property type="match status" value="1"/>
</dbReference>
<dbReference type="PANTHER" id="PTHR42836:SF1">
    <property type="entry name" value="7-CARBOXY-7-DEAZAGUANINE SYNTHASE"/>
    <property type="match status" value="1"/>
</dbReference>
<dbReference type="Pfam" id="PF13353">
    <property type="entry name" value="Fer4_12"/>
    <property type="match status" value="1"/>
</dbReference>
<dbReference type="Pfam" id="PF04055">
    <property type="entry name" value="Radical_SAM"/>
    <property type="match status" value="1"/>
</dbReference>
<dbReference type="PIRSF" id="PIRSF000370">
    <property type="entry name" value="QueE"/>
    <property type="match status" value="1"/>
</dbReference>
<dbReference type="SFLD" id="SFLDS00029">
    <property type="entry name" value="Radical_SAM"/>
    <property type="match status" value="1"/>
</dbReference>
<dbReference type="SUPFAM" id="SSF102114">
    <property type="entry name" value="Radical SAM enzymes"/>
    <property type="match status" value="1"/>
</dbReference>
<dbReference type="PROSITE" id="PS51918">
    <property type="entry name" value="RADICAL_SAM"/>
    <property type="match status" value="1"/>
</dbReference>
<sequence>MSMGPISELLTVSYPIAETFHSLQGEGAWAGGNAFFIRLGGCDVHCPWCDQKETWPTQHHPRQTVTELVQQAVTAKPSFVVITGGEPLMHDLQPLCKTLKNQGLRLHLETSGAYPLTGQFDWITLSPKPYKLPQAAIYPLANELKVIISQDEDFDWAEMEARKISPGTPLYLQAEWETEAMNEKIFAYILTHSQWRLSLQTHKYLGVR</sequence>